<feature type="chain" id="PRO_0000384594" description="Ribosome maturation factor RimP">
    <location>
        <begin position="1"/>
        <end position="151"/>
    </location>
</feature>
<evidence type="ECO:0000255" key="1">
    <source>
        <dbReference type="HAMAP-Rule" id="MF_01077"/>
    </source>
</evidence>
<evidence type="ECO:0000305" key="2"/>
<protein>
    <recommendedName>
        <fullName evidence="1">Ribosome maturation factor RimP</fullName>
    </recommendedName>
</protein>
<proteinExistence type="inferred from homology"/>
<accession>Q0VSS3</accession>
<gene>
    <name evidence="1" type="primary">rimP</name>
    <name type="ordered locus">ABO_0327</name>
</gene>
<name>RIMP_ALCBS</name>
<reference key="1">
    <citation type="journal article" date="2006" name="Nat. Biotechnol.">
        <title>Genome sequence of the ubiquitous hydrocarbon-degrading marine bacterium Alcanivorax borkumensis.</title>
        <authorList>
            <person name="Schneiker S."/>
            <person name="Martins dos Santos V.A.P."/>
            <person name="Bartels D."/>
            <person name="Bekel T."/>
            <person name="Brecht M."/>
            <person name="Buhrmester J."/>
            <person name="Chernikova T.N."/>
            <person name="Denaro R."/>
            <person name="Ferrer M."/>
            <person name="Gertler C."/>
            <person name="Goesmann A."/>
            <person name="Golyshina O.V."/>
            <person name="Kaminski F."/>
            <person name="Khachane A.N."/>
            <person name="Lang S."/>
            <person name="Linke B."/>
            <person name="McHardy A.C."/>
            <person name="Meyer F."/>
            <person name="Nechitaylo T."/>
            <person name="Puehler A."/>
            <person name="Regenhardt D."/>
            <person name="Rupp O."/>
            <person name="Sabirova J.S."/>
            <person name="Selbitschka W."/>
            <person name="Yakimov M.M."/>
            <person name="Timmis K.N."/>
            <person name="Vorhoelter F.-J."/>
            <person name="Weidner S."/>
            <person name="Kaiser O."/>
            <person name="Golyshin P.N."/>
        </authorList>
    </citation>
    <scope>NUCLEOTIDE SEQUENCE [LARGE SCALE GENOMIC DNA]</scope>
    <source>
        <strain>ATCC 700651 / DSM 11573 / NCIMB 13689 / SK2</strain>
    </source>
</reference>
<sequence>MSKRTEQLTELLAPVVEDLGFVLWGVEYIQGRGAVLRVFIDHADGISVDDCAAVSHEVSGVLDVEDPIPGEFNLEVSSPGMDRPMFDITQYVDYIGEDVQLKLLAPVSGKRKMTAAIVAVDGDTLVVELDGETLRVPYSQVDRARLQPRFN</sequence>
<comment type="function">
    <text evidence="1">Required for maturation of 30S ribosomal subunits.</text>
</comment>
<comment type="subcellular location">
    <subcellularLocation>
        <location evidence="1">Cytoplasm</location>
    </subcellularLocation>
</comment>
<comment type="similarity">
    <text evidence="1">Belongs to the RimP family.</text>
</comment>
<comment type="sequence caution" evidence="2">
    <conflict type="erroneous initiation">
        <sequence resource="EMBL-CDS" id="CAL15775"/>
    </conflict>
</comment>
<dbReference type="EMBL" id="AM286690">
    <property type="protein sequence ID" value="CAL15775.1"/>
    <property type="status" value="ALT_INIT"/>
    <property type="molecule type" value="Genomic_DNA"/>
</dbReference>
<dbReference type="RefSeq" id="WP_035459394.1">
    <property type="nucleotide sequence ID" value="NC_008260.1"/>
</dbReference>
<dbReference type="SMR" id="Q0VSS3"/>
<dbReference type="STRING" id="393595.ABO_0327"/>
<dbReference type="KEGG" id="abo:ABO_0327"/>
<dbReference type="eggNOG" id="COG0779">
    <property type="taxonomic scope" value="Bacteria"/>
</dbReference>
<dbReference type="HOGENOM" id="CLU_070525_1_1_6"/>
<dbReference type="OrthoDB" id="9805006at2"/>
<dbReference type="Proteomes" id="UP000008871">
    <property type="component" value="Chromosome"/>
</dbReference>
<dbReference type="GO" id="GO:0005829">
    <property type="term" value="C:cytosol"/>
    <property type="evidence" value="ECO:0007669"/>
    <property type="project" value="TreeGrafter"/>
</dbReference>
<dbReference type="GO" id="GO:0000028">
    <property type="term" value="P:ribosomal small subunit assembly"/>
    <property type="evidence" value="ECO:0007669"/>
    <property type="project" value="TreeGrafter"/>
</dbReference>
<dbReference type="GO" id="GO:0006412">
    <property type="term" value="P:translation"/>
    <property type="evidence" value="ECO:0007669"/>
    <property type="project" value="TreeGrafter"/>
</dbReference>
<dbReference type="CDD" id="cd01734">
    <property type="entry name" value="YlxS_C"/>
    <property type="match status" value="1"/>
</dbReference>
<dbReference type="FunFam" id="3.30.300.70:FF:000001">
    <property type="entry name" value="Ribosome maturation factor RimP"/>
    <property type="match status" value="1"/>
</dbReference>
<dbReference type="Gene3D" id="2.30.30.180">
    <property type="entry name" value="Ribosome maturation factor RimP, C-terminal domain"/>
    <property type="match status" value="1"/>
</dbReference>
<dbReference type="Gene3D" id="3.30.300.70">
    <property type="entry name" value="RimP-like superfamily, N-terminal"/>
    <property type="match status" value="1"/>
</dbReference>
<dbReference type="HAMAP" id="MF_01077">
    <property type="entry name" value="RimP"/>
    <property type="match status" value="1"/>
</dbReference>
<dbReference type="InterPro" id="IPR003728">
    <property type="entry name" value="Ribosome_maturation_RimP"/>
</dbReference>
<dbReference type="InterPro" id="IPR028998">
    <property type="entry name" value="RimP_C"/>
</dbReference>
<dbReference type="InterPro" id="IPR036847">
    <property type="entry name" value="RimP_C_sf"/>
</dbReference>
<dbReference type="InterPro" id="IPR028989">
    <property type="entry name" value="RimP_N"/>
</dbReference>
<dbReference type="InterPro" id="IPR035956">
    <property type="entry name" value="RimP_N_sf"/>
</dbReference>
<dbReference type="NCBIfam" id="NF000927">
    <property type="entry name" value="PRK00092.1-1"/>
    <property type="match status" value="1"/>
</dbReference>
<dbReference type="PANTHER" id="PTHR33867">
    <property type="entry name" value="RIBOSOME MATURATION FACTOR RIMP"/>
    <property type="match status" value="1"/>
</dbReference>
<dbReference type="PANTHER" id="PTHR33867:SF1">
    <property type="entry name" value="RIBOSOME MATURATION FACTOR RIMP"/>
    <property type="match status" value="1"/>
</dbReference>
<dbReference type="Pfam" id="PF17384">
    <property type="entry name" value="DUF150_C"/>
    <property type="match status" value="1"/>
</dbReference>
<dbReference type="Pfam" id="PF02576">
    <property type="entry name" value="RimP_N"/>
    <property type="match status" value="1"/>
</dbReference>
<dbReference type="SUPFAM" id="SSF74942">
    <property type="entry name" value="YhbC-like, C-terminal domain"/>
    <property type="match status" value="1"/>
</dbReference>
<dbReference type="SUPFAM" id="SSF75420">
    <property type="entry name" value="YhbC-like, N-terminal domain"/>
    <property type="match status" value="1"/>
</dbReference>
<keyword id="KW-0963">Cytoplasm</keyword>
<keyword id="KW-1185">Reference proteome</keyword>
<keyword id="KW-0690">Ribosome biogenesis</keyword>
<organism>
    <name type="scientific">Alcanivorax borkumensis (strain ATCC 700651 / DSM 11573 / NCIMB 13689 / SK2)</name>
    <dbReference type="NCBI Taxonomy" id="393595"/>
    <lineage>
        <taxon>Bacteria</taxon>
        <taxon>Pseudomonadati</taxon>
        <taxon>Pseudomonadota</taxon>
        <taxon>Gammaproteobacteria</taxon>
        <taxon>Oceanospirillales</taxon>
        <taxon>Alcanivoracaceae</taxon>
        <taxon>Alcanivorax</taxon>
    </lineage>
</organism>